<reference key="1">
    <citation type="submission" date="2007-08" db="EMBL/GenBank/DDBJ databases">
        <authorList>
            <consortium name="The Citrobacter koseri Genome Sequencing Project"/>
            <person name="McClelland M."/>
            <person name="Sanderson E.K."/>
            <person name="Porwollik S."/>
            <person name="Spieth J."/>
            <person name="Clifton W.S."/>
            <person name="Latreille P."/>
            <person name="Courtney L."/>
            <person name="Wang C."/>
            <person name="Pepin K."/>
            <person name="Bhonagiri V."/>
            <person name="Nash W."/>
            <person name="Johnson M."/>
            <person name="Thiruvilangam P."/>
            <person name="Wilson R."/>
        </authorList>
    </citation>
    <scope>NUCLEOTIDE SEQUENCE [LARGE SCALE GENOMIC DNA]</scope>
    <source>
        <strain>ATCC BAA-895 / CDC 4225-83 / SGSC4696</strain>
    </source>
</reference>
<sequence length="261" mass="28232">MSESLHFTRHGPILEITLDRPKANAIDAKTSFEMGEVFLNFRDDPELRVAIITGGGEKFFSAGWDLKAAAEGEAPDADFGPGGFAGLTEIFDLDKPVIAAVNGYAFGGGFELALAADFIVCADNASFALPEAKLGIVPDSGGVLRLPKLLPPAIVNEMLMTGRRMDAEEALRWGIVNRVVSQQALMDSARELAQQLVNSAPLAIAALKEIYRATSEMPVEEGYRYIRSGALKHYPSVLHSEDAIEGPQAFAEKRDPVWKGR</sequence>
<accession>A8ALR7</accession>
<proteinExistence type="inferred from homology"/>
<organism>
    <name type="scientific">Citrobacter koseri (strain ATCC BAA-895 / CDC 4225-83 / SGSC4696)</name>
    <dbReference type="NCBI Taxonomy" id="290338"/>
    <lineage>
        <taxon>Bacteria</taxon>
        <taxon>Pseudomonadati</taxon>
        <taxon>Pseudomonadota</taxon>
        <taxon>Gammaproteobacteria</taxon>
        <taxon>Enterobacterales</taxon>
        <taxon>Enterobacteriaceae</taxon>
        <taxon>Citrobacter</taxon>
    </lineage>
</organism>
<dbReference type="EC" id="4.2.1.149" evidence="1"/>
<dbReference type="EMBL" id="CP000822">
    <property type="protein sequence ID" value="ABV14430.1"/>
    <property type="molecule type" value="Genomic_DNA"/>
</dbReference>
<dbReference type="RefSeq" id="WP_012134133.1">
    <property type="nucleotide sequence ID" value="NC_009792.1"/>
</dbReference>
<dbReference type="SMR" id="A8ALR7"/>
<dbReference type="STRING" id="290338.CKO_03347"/>
<dbReference type="GeneID" id="45137110"/>
<dbReference type="KEGG" id="cko:CKO_03347"/>
<dbReference type="HOGENOM" id="CLU_009834_7_6_6"/>
<dbReference type="OrthoDB" id="9777711at2"/>
<dbReference type="UniPathway" id="UPA00117"/>
<dbReference type="Proteomes" id="UP000008148">
    <property type="component" value="Chromosome"/>
</dbReference>
<dbReference type="GO" id="GO:0016836">
    <property type="term" value="F:hydro-lyase activity"/>
    <property type="evidence" value="ECO:0007669"/>
    <property type="project" value="UniProtKB-UniRule"/>
</dbReference>
<dbReference type="GO" id="GO:0008735">
    <property type="term" value="F:L-carnitine CoA-transferase activity"/>
    <property type="evidence" value="ECO:0007669"/>
    <property type="project" value="RHEA"/>
</dbReference>
<dbReference type="GO" id="GO:0009437">
    <property type="term" value="P:carnitine metabolic process"/>
    <property type="evidence" value="ECO:0007669"/>
    <property type="project" value="UniProtKB-UniRule"/>
</dbReference>
<dbReference type="GO" id="GO:0006635">
    <property type="term" value="P:fatty acid beta-oxidation"/>
    <property type="evidence" value="ECO:0007669"/>
    <property type="project" value="TreeGrafter"/>
</dbReference>
<dbReference type="CDD" id="cd06558">
    <property type="entry name" value="crotonase-like"/>
    <property type="match status" value="1"/>
</dbReference>
<dbReference type="FunFam" id="1.10.12.10:FF:000005">
    <property type="entry name" value="Carnitinyl-CoA dehydratase"/>
    <property type="match status" value="1"/>
</dbReference>
<dbReference type="FunFam" id="3.90.226.10:FF:000009">
    <property type="entry name" value="Carnitinyl-CoA dehydratase"/>
    <property type="match status" value="1"/>
</dbReference>
<dbReference type="Gene3D" id="3.90.226.10">
    <property type="entry name" value="2-enoyl-CoA Hydratase, Chain A, domain 1"/>
    <property type="match status" value="1"/>
</dbReference>
<dbReference type="Gene3D" id="1.10.12.10">
    <property type="entry name" value="Lyase 2-enoyl-coa Hydratase, Chain A, domain 2"/>
    <property type="match status" value="1"/>
</dbReference>
<dbReference type="HAMAP" id="MF_01051">
    <property type="entry name" value="CaiD"/>
    <property type="match status" value="1"/>
</dbReference>
<dbReference type="InterPro" id="IPR022852">
    <property type="entry name" value="Carnitinyl_CoA_dehydratase"/>
</dbReference>
<dbReference type="InterPro" id="IPR029045">
    <property type="entry name" value="ClpP/crotonase-like_dom_sf"/>
</dbReference>
<dbReference type="InterPro" id="IPR018376">
    <property type="entry name" value="Enoyl-CoA_hyd/isom_CS"/>
</dbReference>
<dbReference type="InterPro" id="IPR001753">
    <property type="entry name" value="Enoyl-CoA_hydra/iso"/>
</dbReference>
<dbReference type="InterPro" id="IPR014748">
    <property type="entry name" value="Enoyl-CoA_hydra_C"/>
</dbReference>
<dbReference type="NCBIfam" id="NF002936">
    <property type="entry name" value="PRK03580.1"/>
    <property type="match status" value="1"/>
</dbReference>
<dbReference type="PANTHER" id="PTHR11941:SF54">
    <property type="entry name" value="ENOYL-COA HYDRATASE, MITOCHONDRIAL"/>
    <property type="match status" value="1"/>
</dbReference>
<dbReference type="PANTHER" id="PTHR11941">
    <property type="entry name" value="ENOYL-COA HYDRATASE-RELATED"/>
    <property type="match status" value="1"/>
</dbReference>
<dbReference type="Pfam" id="PF00378">
    <property type="entry name" value="ECH_1"/>
    <property type="match status" value="1"/>
</dbReference>
<dbReference type="SUPFAM" id="SSF52096">
    <property type="entry name" value="ClpP/crotonase"/>
    <property type="match status" value="1"/>
</dbReference>
<dbReference type="PROSITE" id="PS00166">
    <property type="entry name" value="ENOYL_COA_HYDRATASE"/>
    <property type="match status" value="1"/>
</dbReference>
<gene>
    <name evidence="1" type="primary">caiD</name>
    <name type="ordered locus">CKO_03347</name>
</gene>
<comment type="function">
    <text evidence="1">Catalyzes the reversible dehydration of L-carnitinyl-CoA to crotonobetainyl-CoA.</text>
</comment>
<comment type="catalytic activity">
    <reaction evidence="1">
        <text>(R)-carnitinyl-CoA = crotonobetainyl-CoA + H2O</text>
        <dbReference type="Rhea" id="RHEA:28338"/>
        <dbReference type="ChEBI" id="CHEBI:15377"/>
        <dbReference type="ChEBI" id="CHEBI:60932"/>
        <dbReference type="ChEBI" id="CHEBI:60933"/>
        <dbReference type="EC" id="4.2.1.149"/>
    </reaction>
</comment>
<comment type="pathway">
    <text evidence="1">Amine and polyamine metabolism; carnitine metabolism.</text>
</comment>
<comment type="similarity">
    <text evidence="1">Belongs to the enoyl-CoA hydratase/isomerase family.</text>
</comment>
<feature type="chain" id="PRO_1000064340" description="Carnitinyl-CoA dehydratase">
    <location>
        <begin position="1"/>
        <end position="261"/>
    </location>
</feature>
<feature type="active site" description="Nucleophile" evidence="1">
    <location>
        <position position="111"/>
    </location>
</feature>
<feature type="active site" description="Proton acceptor" evidence="1">
    <location>
        <position position="131"/>
    </location>
</feature>
<keyword id="KW-0456">Lyase</keyword>
<keyword id="KW-1185">Reference proteome</keyword>
<evidence type="ECO:0000255" key="1">
    <source>
        <dbReference type="HAMAP-Rule" id="MF_01051"/>
    </source>
</evidence>
<protein>
    <recommendedName>
        <fullName evidence="1">Carnitinyl-CoA dehydratase</fullName>
        <ecNumber evidence="1">4.2.1.149</ecNumber>
    </recommendedName>
    <alternativeName>
        <fullName evidence="1">Crotonobetainyl-CoA hydratase</fullName>
    </alternativeName>
</protein>
<name>CAID_CITK8</name>